<feature type="initiator methionine" description="Removed" evidence="1">
    <location>
        <position position="1"/>
    </location>
</feature>
<feature type="chain" id="PRO_0000360373" description="Parvalbumin beta-1">
    <location>
        <begin position="2"/>
        <end position="109"/>
    </location>
</feature>
<feature type="domain" description="EF-hand 1" evidence="3">
    <location>
        <begin position="39"/>
        <end position="74"/>
    </location>
</feature>
<feature type="domain" description="EF-hand 2" evidence="3">
    <location>
        <begin position="78"/>
        <end position="109"/>
    </location>
</feature>
<feature type="binding site" evidence="2 3">
    <location>
        <position position="52"/>
    </location>
    <ligand>
        <name>Ca(2+)</name>
        <dbReference type="ChEBI" id="CHEBI:29108"/>
        <label>1</label>
    </ligand>
</feature>
<feature type="binding site" evidence="2 3">
    <location>
        <position position="54"/>
    </location>
    <ligand>
        <name>Ca(2+)</name>
        <dbReference type="ChEBI" id="CHEBI:29108"/>
        <label>1</label>
    </ligand>
</feature>
<feature type="binding site" evidence="2 3">
    <location>
        <position position="56"/>
    </location>
    <ligand>
        <name>Ca(2+)</name>
        <dbReference type="ChEBI" id="CHEBI:29108"/>
        <label>1</label>
    </ligand>
</feature>
<feature type="binding site" evidence="2">
    <location>
        <position position="58"/>
    </location>
    <ligand>
        <name>Ca(2+)</name>
        <dbReference type="ChEBI" id="CHEBI:29108"/>
        <label>1</label>
    </ligand>
</feature>
<feature type="binding site" evidence="2">
    <location>
        <position position="60"/>
    </location>
    <ligand>
        <name>Ca(2+)</name>
        <dbReference type="ChEBI" id="CHEBI:29108"/>
        <label>1</label>
    </ligand>
</feature>
<feature type="binding site" evidence="2 3">
    <location>
        <position position="63"/>
    </location>
    <ligand>
        <name>Ca(2+)</name>
        <dbReference type="ChEBI" id="CHEBI:29108"/>
        <label>1</label>
    </ligand>
</feature>
<feature type="binding site" evidence="2 3">
    <location>
        <position position="91"/>
    </location>
    <ligand>
        <name>Ca(2+)</name>
        <dbReference type="ChEBI" id="CHEBI:29108"/>
        <label>2</label>
    </ligand>
</feature>
<feature type="binding site" evidence="2 3">
    <location>
        <position position="93"/>
    </location>
    <ligand>
        <name>Ca(2+)</name>
        <dbReference type="ChEBI" id="CHEBI:29108"/>
        <label>2</label>
    </ligand>
</feature>
<feature type="binding site" evidence="2 3">
    <location>
        <position position="95"/>
    </location>
    <ligand>
        <name>Ca(2+)</name>
        <dbReference type="ChEBI" id="CHEBI:29108"/>
        <label>2</label>
    </ligand>
</feature>
<feature type="binding site" evidence="3">
    <location>
        <position position="97"/>
    </location>
    <ligand>
        <name>Ca(2+)</name>
        <dbReference type="ChEBI" id="CHEBI:29108"/>
        <label>2</label>
    </ligand>
</feature>
<feature type="binding site" evidence="2 3">
    <location>
        <position position="102"/>
    </location>
    <ligand>
        <name>Ca(2+)</name>
        <dbReference type="ChEBI" id="CHEBI:29108"/>
        <label>2</label>
    </ligand>
</feature>
<feature type="modified residue" description="N-acetylserine" evidence="1">
    <location>
        <position position="2"/>
    </location>
</feature>
<sequence length="109" mass="11496">MSFAGVLADADVKAALAGCAAADSFNYKTFFKACGLAAKSHEEVKKAFFVIDQDQSGFIEEDELKLFLQTFGAGARELTAAETKAFLAAGDEDGDGMIGVDEFVTLVKA</sequence>
<dbReference type="EMBL" id="AY035586">
    <property type="protein sequence ID" value="AAK63088.1"/>
    <property type="molecule type" value="mRNA"/>
</dbReference>
<dbReference type="RefSeq" id="XP_056436857.1">
    <property type="nucleotide sequence ID" value="XM_056580882.1"/>
</dbReference>
<dbReference type="SMR" id="Q90YK8"/>
<dbReference type="Allergome" id="1084">
    <property type="allergen name" value="The ch 1"/>
</dbReference>
<dbReference type="GeneID" id="130374217"/>
<dbReference type="GO" id="GO:0005737">
    <property type="term" value="C:cytoplasm"/>
    <property type="evidence" value="ECO:0007669"/>
    <property type="project" value="TreeGrafter"/>
</dbReference>
<dbReference type="GO" id="GO:0005509">
    <property type="term" value="F:calcium ion binding"/>
    <property type="evidence" value="ECO:0007669"/>
    <property type="project" value="InterPro"/>
</dbReference>
<dbReference type="FunFam" id="1.10.238.10:FF:000060">
    <property type="entry name" value="Parvalbumin, thymic"/>
    <property type="match status" value="1"/>
</dbReference>
<dbReference type="Gene3D" id="1.10.238.10">
    <property type="entry name" value="EF-hand"/>
    <property type="match status" value="1"/>
</dbReference>
<dbReference type="InterPro" id="IPR011992">
    <property type="entry name" value="EF-hand-dom_pair"/>
</dbReference>
<dbReference type="InterPro" id="IPR018247">
    <property type="entry name" value="EF_Hand_1_Ca_BS"/>
</dbReference>
<dbReference type="InterPro" id="IPR002048">
    <property type="entry name" value="EF_hand_dom"/>
</dbReference>
<dbReference type="InterPro" id="IPR008080">
    <property type="entry name" value="Parvalbumin"/>
</dbReference>
<dbReference type="PANTHER" id="PTHR11653:SF12">
    <property type="entry name" value="PARVALBUMIN"/>
    <property type="match status" value="1"/>
</dbReference>
<dbReference type="PANTHER" id="PTHR11653">
    <property type="entry name" value="PARVALBUMIN ALPHA"/>
    <property type="match status" value="1"/>
</dbReference>
<dbReference type="Pfam" id="PF13499">
    <property type="entry name" value="EF-hand_7"/>
    <property type="match status" value="1"/>
</dbReference>
<dbReference type="PRINTS" id="PR01697">
    <property type="entry name" value="PARVALBUMIN"/>
</dbReference>
<dbReference type="SMART" id="SM00054">
    <property type="entry name" value="EFh"/>
    <property type="match status" value="2"/>
</dbReference>
<dbReference type="SUPFAM" id="SSF47473">
    <property type="entry name" value="EF-hand"/>
    <property type="match status" value="1"/>
</dbReference>
<dbReference type="PROSITE" id="PS00018">
    <property type="entry name" value="EF_HAND_1"/>
    <property type="match status" value="2"/>
</dbReference>
<dbReference type="PROSITE" id="PS50222">
    <property type="entry name" value="EF_HAND_2"/>
    <property type="match status" value="2"/>
</dbReference>
<reference key="1">
    <citation type="journal article" date="2005" name="Mol. Immunol.">
        <title>Characterization of parvalbumin, the major allergen in Alaska pollack, and comparison with codfish Allergen M.</title>
        <authorList>
            <person name="Van Do T."/>
            <person name="Hordvik I."/>
            <person name="Endresen C."/>
            <person name="Elsayed S."/>
        </authorList>
    </citation>
    <scope>NUCLEOTIDE SEQUENCE [MRNA]</scope>
    <scope>ALLERGEN</scope>
</reference>
<evidence type="ECO:0000250" key="1"/>
<evidence type="ECO:0000250" key="2">
    <source>
        <dbReference type="UniProtKB" id="P02621"/>
    </source>
</evidence>
<evidence type="ECO:0000255" key="3">
    <source>
        <dbReference type="PROSITE-ProRule" id="PRU00448"/>
    </source>
</evidence>
<evidence type="ECO:0000269" key="4">
    <source>
    </source>
</evidence>
<evidence type="ECO:0000305" key="5"/>
<name>PRVB1_GADCH</name>
<proteinExistence type="evidence at protein level"/>
<comment type="function">
    <text evidence="1">In muscle, parvalbumin is thought to be involved in relaxation after contraction. It binds two calcium ions (By similarity).</text>
</comment>
<comment type="allergen">
    <text evidence="4">Causes an allergic reaction in human.</text>
</comment>
<comment type="similarity">
    <text evidence="5">Belongs to the parvalbumin family.</text>
</comment>
<protein>
    <recommendedName>
        <fullName>Parvalbumin beta-1</fullName>
    </recommendedName>
    <allergenName>The c 1</allergenName>
</protein>
<accession>Q90YK8</accession>
<keyword id="KW-0007">Acetylation</keyword>
<keyword id="KW-0020">Allergen</keyword>
<keyword id="KW-0106">Calcium</keyword>
<keyword id="KW-0479">Metal-binding</keyword>
<keyword id="KW-0514">Muscle protein</keyword>
<keyword id="KW-0677">Repeat</keyword>
<organism>
    <name type="scientific">Gadus chalcogrammus</name>
    <name type="common">Alaska pollock</name>
    <name type="synonym">Theragra chalcogramma</name>
    <dbReference type="NCBI Taxonomy" id="1042646"/>
    <lineage>
        <taxon>Eukaryota</taxon>
        <taxon>Metazoa</taxon>
        <taxon>Chordata</taxon>
        <taxon>Craniata</taxon>
        <taxon>Vertebrata</taxon>
        <taxon>Euteleostomi</taxon>
        <taxon>Actinopterygii</taxon>
        <taxon>Neopterygii</taxon>
        <taxon>Teleostei</taxon>
        <taxon>Neoteleostei</taxon>
        <taxon>Acanthomorphata</taxon>
        <taxon>Zeiogadaria</taxon>
        <taxon>Gadariae</taxon>
        <taxon>Gadiformes</taxon>
        <taxon>Gadoidei</taxon>
        <taxon>Gadidae</taxon>
        <taxon>Gadus</taxon>
    </lineage>
</organism>